<feature type="chain" id="PRO_0000209466" description="Fe/S biogenesis protein NfuA">
    <location>
        <begin position="1"/>
        <end position="191"/>
    </location>
</feature>
<feature type="binding site" evidence="1">
    <location>
        <position position="149"/>
    </location>
    <ligand>
        <name>[4Fe-4S] cluster</name>
        <dbReference type="ChEBI" id="CHEBI:49883"/>
    </ligand>
</feature>
<feature type="binding site" evidence="1">
    <location>
        <position position="152"/>
    </location>
    <ligand>
        <name>[4Fe-4S] cluster</name>
        <dbReference type="ChEBI" id="CHEBI:49883"/>
    </ligand>
</feature>
<name>NFUA_ECO57</name>
<protein>
    <recommendedName>
        <fullName evidence="1">Fe/S biogenesis protein NfuA</fullName>
    </recommendedName>
</protein>
<comment type="function">
    <text evidence="1">Involved in iron-sulfur cluster biogenesis. Binds a 4Fe-4S cluster, can transfer this cluster to apoproteins, and thereby intervenes in the maturation of Fe/S proteins. Could also act as a scaffold/chaperone for damaged Fe/S proteins.</text>
</comment>
<comment type="cofactor">
    <cofactor evidence="1">
        <name>[4Fe-4S] cluster</name>
        <dbReference type="ChEBI" id="CHEBI:49883"/>
    </cofactor>
    <text evidence="1">Binds 1 [4Fe-4S] cluster per subunit. The cluster is presumably bound at the interface of two monomers.</text>
</comment>
<comment type="subunit">
    <text evidence="1">Homodimer.</text>
</comment>
<comment type="similarity">
    <text evidence="1">Belongs to the NfuA family.</text>
</comment>
<keyword id="KW-0004">4Fe-4S</keyword>
<keyword id="KW-0408">Iron</keyword>
<keyword id="KW-0411">Iron-sulfur</keyword>
<keyword id="KW-0479">Metal-binding</keyword>
<keyword id="KW-1185">Reference proteome</keyword>
<accession>P63022</accession>
<accession>P46847</accession>
<dbReference type="EMBL" id="AE005174">
    <property type="protein sequence ID" value="AAG58515.1"/>
    <property type="molecule type" value="Genomic_DNA"/>
</dbReference>
<dbReference type="EMBL" id="BA000007">
    <property type="protein sequence ID" value="BAB37679.1"/>
    <property type="molecule type" value="Genomic_DNA"/>
</dbReference>
<dbReference type="PIR" id="G86006">
    <property type="entry name" value="G86006"/>
</dbReference>
<dbReference type="PIR" id="H91160">
    <property type="entry name" value="H91160"/>
</dbReference>
<dbReference type="RefSeq" id="NP_312283.1">
    <property type="nucleotide sequence ID" value="NC_002695.1"/>
</dbReference>
<dbReference type="RefSeq" id="WP_000619389.1">
    <property type="nucleotide sequence ID" value="NZ_SWKA01000005.1"/>
</dbReference>
<dbReference type="SMR" id="P63022"/>
<dbReference type="STRING" id="155864.Z4769"/>
<dbReference type="GeneID" id="915886"/>
<dbReference type="GeneID" id="93778582"/>
<dbReference type="KEGG" id="ece:Z4769"/>
<dbReference type="KEGG" id="ecs:ECs_4256"/>
<dbReference type="PATRIC" id="fig|386585.9.peg.4446"/>
<dbReference type="eggNOG" id="COG0316">
    <property type="taxonomic scope" value="Bacteria"/>
</dbReference>
<dbReference type="eggNOG" id="COG0694">
    <property type="taxonomic scope" value="Bacteria"/>
</dbReference>
<dbReference type="HOGENOM" id="CLU_094569_0_0_6"/>
<dbReference type="OMA" id="CLAYCRP"/>
<dbReference type="Proteomes" id="UP000000558">
    <property type="component" value="Chromosome"/>
</dbReference>
<dbReference type="Proteomes" id="UP000002519">
    <property type="component" value="Chromosome"/>
</dbReference>
<dbReference type="GO" id="GO:0051539">
    <property type="term" value="F:4 iron, 4 sulfur cluster binding"/>
    <property type="evidence" value="ECO:0007669"/>
    <property type="project" value="UniProtKB-UniRule"/>
</dbReference>
<dbReference type="GO" id="GO:0005506">
    <property type="term" value="F:iron ion binding"/>
    <property type="evidence" value="ECO:0007669"/>
    <property type="project" value="InterPro"/>
</dbReference>
<dbReference type="GO" id="GO:0016226">
    <property type="term" value="P:iron-sulfur cluster assembly"/>
    <property type="evidence" value="ECO:0007669"/>
    <property type="project" value="UniProtKB-UniRule"/>
</dbReference>
<dbReference type="GO" id="GO:0051604">
    <property type="term" value="P:protein maturation"/>
    <property type="evidence" value="ECO:0007669"/>
    <property type="project" value="UniProtKB-UniRule"/>
</dbReference>
<dbReference type="FunFam" id="2.60.300.12:FF:000004">
    <property type="entry name" value="Fe/S biogenesis protein NfuA"/>
    <property type="match status" value="1"/>
</dbReference>
<dbReference type="FunFam" id="3.30.300.130:FF:000002">
    <property type="entry name" value="Fe/S biogenesis protein NfuA"/>
    <property type="match status" value="1"/>
</dbReference>
<dbReference type="Gene3D" id="3.30.300.130">
    <property type="entry name" value="Fe-S cluster assembly (FSCA)"/>
    <property type="match status" value="1"/>
</dbReference>
<dbReference type="Gene3D" id="2.60.300.12">
    <property type="entry name" value="HesB-like domain"/>
    <property type="match status" value="1"/>
</dbReference>
<dbReference type="HAMAP" id="MF_01637">
    <property type="entry name" value="Fe_S_biogen_NfuA"/>
    <property type="match status" value="1"/>
</dbReference>
<dbReference type="InterPro" id="IPR017726">
    <property type="entry name" value="Fe/S_biogenesis_protein_NfuA"/>
</dbReference>
<dbReference type="InterPro" id="IPR000361">
    <property type="entry name" value="FeS_biogenesis"/>
</dbReference>
<dbReference type="InterPro" id="IPR034904">
    <property type="entry name" value="FSCA_dom_sf"/>
</dbReference>
<dbReference type="InterPro" id="IPR035903">
    <property type="entry name" value="HesB-like_dom_sf"/>
</dbReference>
<dbReference type="InterPro" id="IPR001075">
    <property type="entry name" value="NIF_FeS_clus_asmbl_NifU_C"/>
</dbReference>
<dbReference type="NCBIfam" id="NF008392">
    <property type="entry name" value="PRK11190.1"/>
    <property type="match status" value="1"/>
</dbReference>
<dbReference type="NCBIfam" id="TIGR03341">
    <property type="entry name" value="YhgI_GntY"/>
    <property type="match status" value="1"/>
</dbReference>
<dbReference type="PANTHER" id="PTHR11178:SF51">
    <property type="entry name" value="FE_S BIOGENESIS PROTEIN NFUA"/>
    <property type="match status" value="1"/>
</dbReference>
<dbReference type="PANTHER" id="PTHR11178">
    <property type="entry name" value="IRON-SULFUR CLUSTER SCAFFOLD PROTEIN NFU-RELATED"/>
    <property type="match status" value="1"/>
</dbReference>
<dbReference type="Pfam" id="PF01521">
    <property type="entry name" value="Fe-S_biosyn"/>
    <property type="match status" value="1"/>
</dbReference>
<dbReference type="Pfam" id="PF01106">
    <property type="entry name" value="NifU"/>
    <property type="match status" value="1"/>
</dbReference>
<dbReference type="SUPFAM" id="SSF117916">
    <property type="entry name" value="Fe-S cluster assembly (FSCA) domain-like"/>
    <property type="match status" value="1"/>
</dbReference>
<dbReference type="SUPFAM" id="SSF89360">
    <property type="entry name" value="HesB-like domain"/>
    <property type="match status" value="1"/>
</dbReference>
<proteinExistence type="inferred from homology"/>
<organism>
    <name type="scientific">Escherichia coli O157:H7</name>
    <dbReference type="NCBI Taxonomy" id="83334"/>
    <lineage>
        <taxon>Bacteria</taxon>
        <taxon>Pseudomonadati</taxon>
        <taxon>Pseudomonadota</taxon>
        <taxon>Gammaproteobacteria</taxon>
        <taxon>Enterobacterales</taxon>
        <taxon>Enterobacteriaceae</taxon>
        <taxon>Escherichia</taxon>
    </lineage>
</organism>
<gene>
    <name evidence="1" type="primary">nfuA</name>
    <name type="ordered locus">Z4769</name>
    <name type="ordered locus">ECs4256</name>
</gene>
<evidence type="ECO:0000255" key="1">
    <source>
        <dbReference type="HAMAP-Rule" id="MF_01637"/>
    </source>
</evidence>
<sequence length="191" mass="20998">MIRISDAAQAHFAKLLANQEEGTQIRVFVINPGTPNAECGVSYCPPDAVEATDTALKFDLLTAYVDELSAPYLEDAEIDFVTDQLGSQLTLKAPNAKMRKVADDAPLMERVEYMLQSQINPQLAGHGGRVSLMEITEDGYAILQFGGGCNGCSMVDVTLKEGIEKQLLNEFPELKGVRDLTEHQRGEHSYY</sequence>
<reference key="1">
    <citation type="journal article" date="2001" name="Nature">
        <title>Genome sequence of enterohaemorrhagic Escherichia coli O157:H7.</title>
        <authorList>
            <person name="Perna N.T."/>
            <person name="Plunkett G. III"/>
            <person name="Burland V."/>
            <person name="Mau B."/>
            <person name="Glasner J.D."/>
            <person name="Rose D.J."/>
            <person name="Mayhew G.F."/>
            <person name="Evans P.S."/>
            <person name="Gregor J."/>
            <person name="Kirkpatrick H.A."/>
            <person name="Posfai G."/>
            <person name="Hackett J."/>
            <person name="Klink S."/>
            <person name="Boutin A."/>
            <person name="Shao Y."/>
            <person name="Miller L."/>
            <person name="Grotbeck E.J."/>
            <person name="Davis N.W."/>
            <person name="Lim A."/>
            <person name="Dimalanta E.T."/>
            <person name="Potamousis K."/>
            <person name="Apodaca J."/>
            <person name="Anantharaman T.S."/>
            <person name="Lin J."/>
            <person name="Yen G."/>
            <person name="Schwartz D.C."/>
            <person name="Welch R.A."/>
            <person name="Blattner F.R."/>
        </authorList>
    </citation>
    <scope>NUCLEOTIDE SEQUENCE [LARGE SCALE GENOMIC DNA]</scope>
    <source>
        <strain>O157:H7 / EDL933 / ATCC 700927 / EHEC</strain>
    </source>
</reference>
<reference key="2">
    <citation type="journal article" date="2001" name="DNA Res.">
        <title>Complete genome sequence of enterohemorrhagic Escherichia coli O157:H7 and genomic comparison with a laboratory strain K-12.</title>
        <authorList>
            <person name="Hayashi T."/>
            <person name="Makino K."/>
            <person name="Ohnishi M."/>
            <person name="Kurokawa K."/>
            <person name="Ishii K."/>
            <person name="Yokoyama K."/>
            <person name="Han C.-G."/>
            <person name="Ohtsubo E."/>
            <person name="Nakayama K."/>
            <person name="Murata T."/>
            <person name="Tanaka M."/>
            <person name="Tobe T."/>
            <person name="Iida T."/>
            <person name="Takami H."/>
            <person name="Honda T."/>
            <person name="Sasakawa C."/>
            <person name="Ogasawara N."/>
            <person name="Yasunaga T."/>
            <person name="Kuhara S."/>
            <person name="Shiba T."/>
            <person name="Hattori M."/>
            <person name="Shinagawa H."/>
        </authorList>
    </citation>
    <scope>NUCLEOTIDE SEQUENCE [LARGE SCALE GENOMIC DNA]</scope>
    <source>
        <strain>O157:H7 / Sakai / RIMD 0509952 / EHEC</strain>
    </source>
</reference>